<evidence type="ECO:0000250" key="1"/>
<evidence type="ECO:0000255" key="2"/>
<evidence type="ECO:0000255" key="3">
    <source>
        <dbReference type="PROSITE-ProRule" id="PRU00068"/>
    </source>
</evidence>
<evidence type="ECO:0000255" key="4">
    <source>
        <dbReference type="PROSITE-ProRule" id="PRU00276"/>
    </source>
</evidence>
<evidence type="ECO:0000255" key="5">
    <source>
        <dbReference type="PROSITE-ProRule" id="PRU10095"/>
    </source>
</evidence>
<evidence type="ECO:0000269" key="6">
    <source>
    </source>
</evidence>
<evidence type="ECO:0000269" key="7">
    <source>
    </source>
</evidence>
<evidence type="ECO:0000269" key="8">
    <source>
    </source>
</evidence>
<evidence type="ECO:0000305" key="9"/>
<accession>Q7T046</accession>
<keyword id="KW-1204">Blood coagulation cascade activating toxin</keyword>
<keyword id="KW-0106">Calcium</keyword>
<keyword id="KW-0903">Direct protein sequencing</keyword>
<keyword id="KW-1015">Disulfide bond</keyword>
<keyword id="KW-0325">Glycoprotein</keyword>
<keyword id="KW-1199">Hemostasis impairing toxin</keyword>
<keyword id="KW-0378">Hydrolase</keyword>
<keyword id="KW-0479">Metal-binding</keyword>
<keyword id="KW-0482">Metalloprotease</keyword>
<keyword id="KW-0645">Protease</keyword>
<keyword id="KW-0964">Secreted</keyword>
<keyword id="KW-0732">Signal</keyword>
<keyword id="KW-0800">Toxin</keyword>
<keyword id="KW-0862">Zinc</keyword>
<keyword id="KW-0865">Zymogen</keyword>
<organism>
    <name type="scientific">Macrovipera lebetinus</name>
    <name type="common">Levantine viper</name>
    <name type="synonym">Vipera lebetina</name>
    <dbReference type="NCBI Taxonomy" id="3148341"/>
    <lineage>
        <taxon>Eukaryota</taxon>
        <taxon>Metazoa</taxon>
        <taxon>Chordata</taxon>
        <taxon>Craniata</taxon>
        <taxon>Vertebrata</taxon>
        <taxon>Euteleostomi</taxon>
        <taxon>Lepidosauria</taxon>
        <taxon>Squamata</taxon>
        <taxon>Bifurcata</taxon>
        <taxon>Unidentata</taxon>
        <taxon>Episquamata</taxon>
        <taxon>Toxicofera</taxon>
        <taxon>Serpentes</taxon>
        <taxon>Colubroidea</taxon>
        <taxon>Viperidae</taxon>
        <taxon>Viperinae</taxon>
        <taxon>Macrovipera</taxon>
    </lineage>
</organism>
<dbReference type="EC" id="3.4.24.58"/>
<dbReference type="EMBL" id="AY339162">
    <property type="protein sequence ID" value="AAQ17467.1"/>
    <property type="molecule type" value="mRNA"/>
</dbReference>
<dbReference type="SMR" id="Q7T046"/>
<dbReference type="MEROPS" id="M12.158"/>
<dbReference type="GO" id="GO:0005576">
    <property type="term" value="C:extracellular region"/>
    <property type="evidence" value="ECO:0007669"/>
    <property type="project" value="UniProtKB-SubCell"/>
</dbReference>
<dbReference type="GO" id="GO:0005886">
    <property type="term" value="C:plasma membrane"/>
    <property type="evidence" value="ECO:0007669"/>
    <property type="project" value="TreeGrafter"/>
</dbReference>
<dbReference type="GO" id="GO:0046872">
    <property type="term" value="F:metal ion binding"/>
    <property type="evidence" value="ECO:0007669"/>
    <property type="project" value="UniProtKB-KW"/>
</dbReference>
<dbReference type="GO" id="GO:0004222">
    <property type="term" value="F:metalloendopeptidase activity"/>
    <property type="evidence" value="ECO:0007669"/>
    <property type="project" value="InterPro"/>
</dbReference>
<dbReference type="GO" id="GO:0090729">
    <property type="term" value="F:toxin activity"/>
    <property type="evidence" value="ECO:0007669"/>
    <property type="project" value="UniProtKB-KW"/>
</dbReference>
<dbReference type="GO" id="GO:0006508">
    <property type="term" value="P:proteolysis"/>
    <property type="evidence" value="ECO:0007669"/>
    <property type="project" value="UniProtKB-KW"/>
</dbReference>
<dbReference type="CDD" id="cd04269">
    <property type="entry name" value="ZnMc_adamalysin_II_like"/>
    <property type="match status" value="1"/>
</dbReference>
<dbReference type="FunFam" id="3.40.390.10:FF:000002">
    <property type="entry name" value="Disintegrin and metalloproteinase domain-containing protein 22"/>
    <property type="match status" value="1"/>
</dbReference>
<dbReference type="FunFam" id="4.10.70.10:FF:000001">
    <property type="entry name" value="Disintegrin and metalloproteinase domain-containing protein 22"/>
    <property type="match status" value="1"/>
</dbReference>
<dbReference type="Gene3D" id="3.40.390.10">
    <property type="entry name" value="Collagenase (Catalytic Domain)"/>
    <property type="match status" value="1"/>
</dbReference>
<dbReference type="Gene3D" id="4.10.70.10">
    <property type="entry name" value="Disintegrin domain"/>
    <property type="match status" value="1"/>
</dbReference>
<dbReference type="InterPro" id="IPR006586">
    <property type="entry name" value="ADAM_Cys-rich"/>
</dbReference>
<dbReference type="InterPro" id="IPR018358">
    <property type="entry name" value="Disintegrin_CS"/>
</dbReference>
<dbReference type="InterPro" id="IPR001762">
    <property type="entry name" value="Disintegrin_dom"/>
</dbReference>
<dbReference type="InterPro" id="IPR036436">
    <property type="entry name" value="Disintegrin_dom_sf"/>
</dbReference>
<dbReference type="InterPro" id="IPR024079">
    <property type="entry name" value="MetalloPept_cat_dom_sf"/>
</dbReference>
<dbReference type="InterPro" id="IPR001590">
    <property type="entry name" value="Peptidase_M12B"/>
</dbReference>
<dbReference type="InterPro" id="IPR002870">
    <property type="entry name" value="Peptidase_M12B_N"/>
</dbReference>
<dbReference type="InterPro" id="IPR034027">
    <property type="entry name" value="Reprolysin_adamalysin"/>
</dbReference>
<dbReference type="PANTHER" id="PTHR11905">
    <property type="entry name" value="ADAM A DISINTEGRIN AND METALLOPROTEASE DOMAIN"/>
    <property type="match status" value="1"/>
</dbReference>
<dbReference type="PANTHER" id="PTHR11905:SF32">
    <property type="entry name" value="DISINTEGRIN AND METALLOPROTEINASE DOMAIN-CONTAINING PROTEIN 28"/>
    <property type="match status" value="1"/>
</dbReference>
<dbReference type="Pfam" id="PF08516">
    <property type="entry name" value="ADAM_CR"/>
    <property type="match status" value="1"/>
</dbReference>
<dbReference type="Pfam" id="PF00200">
    <property type="entry name" value="Disintegrin"/>
    <property type="match status" value="1"/>
</dbReference>
<dbReference type="Pfam" id="PF01562">
    <property type="entry name" value="Pep_M12B_propep"/>
    <property type="match status" value="1"/>
</dbReference>
<dbReference type="Pfam" id="PF01421">
    <property type="entry name" value="Reprolysin"/>
    <property type="match status" value="1"/>
</dbReference>
<dbReference type="PRINTS" id="PR00289">
    <property type="entry name" value="DISINTEGRIN"/>
</dbReference>
<dbReference type="SMART" id="SM00608">
    <property type="entry name" value="ACR"/>
    <property type="match status" value="1"/>
</dbReference>
<dbReference type="SMART" id="SM00050">
    <property type="entry name" value="DISIN"/>
    <property type="match status" value="1"/>
</dbReference>
<dbReference type="SUPFAM" id="SSF57552">
    <property type="entry name" value="Blood coagulation inhibitor (disintegrin)"/>
    <property type="match status" value="1"/>
</dbReference>
<dbReference type="SUPFAM" id="SSF55486">
    <property type="entry name" value="Metalloproteases ('zincins'), catalytic domain"/>
    <property type="match status" value="1"/>
</dbReference>
<dbReference type="PROSITE" id="PS50215">
    <property type="entry name" value="ADAM_MEPRO"/>
    <property type="match status" value="1"/>
</dbReference>
<dbReference type="PROSITE" id="PS00427">
    <property type="entry name" value="DISINTEGRIN_1"/>
    <property type="match status" value="1"/>
</dbReference>
<dbReference type="PROSITE" id="PS50214">
    <property type="entry name" value="DISINTEGRIN_2"/>
    <property type="match status" value="1"/>
</dbReference>
<dbReference type="PROSITE" id="PS00142">
    <property type="entry name" value="ZINC_PROTEASE"/>
    <property type="match status" value="1"/>
</dbReference>
<feature type="signal peptide" evidence="2">
    <location>
        <begin position="1"/>
        <end position="20"/>
    </location>
</feature>
<feature type="propeptide" id="PRO_0000029029" description="Or 194" evidence="8">
    <location>
        <begin position="21"/>
        <end position="193"/>
    </location>
</feature>
<feature type="chain" id="PRO_0000029030" description="Coagulation factor X-activating enzyme heavy chain">
    <location>
        <begin position="194"/>
        <end position="612"/>
    </location>
</feature>
<feature type="chain" id="PRO_0000029031" description="Coagulation factor X-activating enzyme heavy chain alternate form">
    <location>
        <begin position="195"/>
        <end position="612"/>
    </location>
</feature>
<feature type="domain" description="Peptidase M12B" evidence="4">
    <location>
        <begin position="201"/>
        <end position="395"/>
    </location>
</feature>
<feature type="domain" description="Disintegrin" evidence="3">
    <location>
        <begin position="403"/>
        <end position="489"/>
    </location>
</feature>
<feature type="short sequence motif" description="D/ECD-tripeptide">
    <location>
        <begin position="467"/>
        <end position="469"/>
    </location>
</feature>
<feature type="active site" evidence="4 5">
    <location>
        <position position="336"/>
    </location>
</feature>
<feature type="binding site" evidence="1">
    <location>
        <position position="204"/>
    </location>
    <ligand>
        <name>Ca(2+)</name>
        <dbReference type="ChEBI" id="CHEBI:29108"/>
        <label>1</label>
    </ligand>
</feature>
<feature type="binding site" evidence="1">
    <location>
        <position position="286"/>
    </location>
    <ligand>
        <name>Ca(2+)</name>
        <dbReference type="ChEBI" id="CHEBI:29108"/>
        <label>1</label>
    </ligand>
</feature>
<feature type="binding site" evidence="1">
    <location>
        <position position="335"/>
    </location>
    <ligand>
        <name>Zn(2+)</name>
        <dbReference type="ChEBI" id="CHEBI:29105"/>
        <note>catalytic</note>
    </ligand>
</feature>
<feature type="binding site" evidence="1">
    <location>
        <position position="339"/>
    </location>
    <ligand>
        <name>Zn(2+)</name>
        <dbReference type="ChEBI" id="CHEBI:29105"/>
        <note>catalytic</note>
    </ligand>
</feature>
<feature type="binding site" evidence="1">
    <location>
        <position position="345"/>
    </location>
    <ligand>
        <name>Zn(2+)</name>
        <dbReference type="ChEBI" id="CHEBI:29105"/>
        <note>catalytic</note>
    </ligand>
</feature>
<feature type="binding site" evidence="1">
    <location>
        <position position="390"/>
    </location>
    <ligand>
        <name>Ca(2+)</name>
        <dbReference type="ChEBI" id="CHEBI:29108"/>
        <label>1</label>
    </ligand>
</feature>
<feature type="binding site" evidence="1">
    <location>
        <position position="393"/>
    </location>
    <ligand>
        <name>Ca(2+)</name>
        <dbReference type="ChEBI" id="CHEBI:29108"/>
        <label>1</label>
    </ligand>
</feature>
<feature type="binding site" evidence="1">
    <location>
        <position position="405"/>
    </location>
    <ligand>
        <name>Ca(2+)</name>
        <dbReference type="ChEBI" id="CHEBI:29108"/>
        <label>2</label>
    </ligand>
</feature>
<feature type="binding site" evidence="1">
    <location>
        <position position="408"/>
    </location>
    <ligand>
        <name>Ca(2+)</name>
        <dbReference type="ChEBI" id="CHEBI:29108"/>
        <label>2</label>
    </ligand>
</feature>
<feature type="binding site" evidence="1">
    <location>
        <position position="412"/>
    </location>
    <ligand>
        <name>Ca(2+)</name>
        <dbReference type="ChEBI" id="CHEBI:29108"/>
        <label>2</label>
    </ligand>
</feature>
<feature type="binding site" evidence="1">
    <location>
        <position position="415"/>
    </location>
    <ligand>
        <name>Ca(2+)</name>
        <dbReference type="ChEBI" id="CHEBI:29108"/>
        <label>2</label>
    </ligand>
</feature>
<feature type="binding site" evidence="1">
    <location>
        <position position="418"/>
    </location>
    <ligand>
        <name>Ca(2+)</name>
        <dbReference type="ChEBI" id="CHEBI:29108"/>
        <label>2</label>
    </ligand>
</feature>
<feature type="glycosylation site" description="N-linked (GlcNAc...) asparagine" evidence="2">
    <location>
        <position position="259"/>
    </location>
</feature>
<feature type="glycosylation site" description="N-linked (GlcNAc...) asparagine" evidence="2">
    <location>
        <position position="353"/>
    </location>
</feature>
<feature type="glycosylation site" description="N-linked (GlcNAc...) asparagine" evidence="2">
    <location>
        <position position="373"/>
    </location>
</feature>
<feature type="disulfide bond" evidence="1">
    <location>
        <begin position="310"/>
        <end position="390"/>
    </location>
</feature>
<feature type="disulfide bond" evidence="1">
    <location>
        <begin position="350"/>
        <end position="374"/>
    </location>
</feature>
<feature type="disulfide bond" evidence="1">
    <location>
        <begin position="352"/>
        <end position="357"/>
    </location>
</feature>
<feature type="disulfide bond" evidence="1">
    <location>
        <begin position="461"/>
        <end position="481"/>
    </location>
</feature>
<feature type="disulfide bond" description="Interchain (with C-158 in coagulation factor X-activating enzyme light chain LC2)" evidence="3 4">
    <location>
        <position position="579"/>
    </location>
</feature>
<name>VM3CX_MACLB</name>
<protein>
    <recommendedName>
        <fullName>Coagulation factor X-activating enzyme heavy chain</fullName>
        <ecNumber>3.4.24.58</ecNumber>
    </recommendedName>
    <alternativeName>
        <fullName>Coagulation factor X-activating enzyme chain alpha</fullName>
    </alternativeName>
    <alternativeName>
        <fullName>Snake venom metalloproteinase</fullName>
        <shortName>SVMP</shortName>
    </alternativeName>
    <alternativeName>
        <fullName>VL factor X activator</fullName>
    </alternativeName>
    <alternativeName>
        <fullName>VLFXA heavy chain</fullName>
    </alternativeName>
    <component>
        <recommendedName>
            <fullName>Coagulation factor X-activating enzyme heavy chain alternate form</fullName>
        </recommendedName>
    </component>
</protein>
<reference key="1">
    <citation type="journal article" date="2004" name="Biochim. Biophys. Acta">
        <title>Factor X activator from Vipera lebetina venom is synthesized from different genes.</title>
        <authorList>
            <person name="Siigur E."/>
            <person name="Aaspollu A."/>
            <person name="Trummal K."/>
            <person name="Tonismaegi K."/>
            <person name="Tammiste I."/>
            <person name="Kalkkinen N."/>
            <person name="Siigur J."/>
        </authorList>
    </citation>
    <scope>NUCLEOTIDE SEQUENCE [MRNA]</scope>
    <scope>PROTEIN SEQUENCE OF 194-207</scope>
    <scope>GLYCOSYLATION</scope>
    <scope>SUBUNIT</scope>
    <source>
        <tissue>Venom</tissue>
        <tissue>Venom gland</tissue>
    </source>
</reference>
<reference key="2">
    <citation type="journal article" date="2001" name="Biochim. Biophys. Acta">
        <title>Factor X activator from Vipera lebetina snake venom, molecular characterization and substrate specificity.</title>
        <authorList>
            <person name="Siigur E."/>
            <person name="Tonismagi K."/>
            <person name="Trummal K."/>
            <person name="Samel M."/>
            <person name="Vija H."/>
            <person name="Subbi J."/>
            <person name="Siigur J."/>
        </authorList>
    </citation>
    <scope>FUNCTION</scope>
    <scope>SUBUNIT</scope>
    <scope>GLYCOSYLATION</scope>
    <source>
        <tissue>Venom</tissue>
    </source>
</reference>
<reference key="3">
    <citation type="journal article" date="2001" name="Haemostasis">
        <title>Proteases from Vipera lebetina venom affecting coagulation and fibrinolysis.</title>
        <authorList>
            <person name="Siigur J."/>
            <person name="Aaspollu A."/>
            <person name="Tonismagi K."/>
            <person name="Trummal K."/>
            <person name="Samel M."/>
            <person name="Vija H."/>
            <person name="Subbi J."/>
            <person name="Siigur E."/>
        </authorList>
    </citation>
    <scope>FUNCTION</scope>
    <scope>BIOPHYSICOCHEMICAL PROPERTIES</scope>
    <scope>ACTIVITY REGULATION</scope>
    <scope>GLYCOSYLATION</scope>
    <source>
        <tissue>Venom</tissue>
    </source>
</reference>
<proteinExistence type="evidence at protein level"/>
<sequence>MMQVLLVTISLAVFPYQGSSIILESGNVNDYEVVYPQKITALPEEAVQQPEQKYEDTMQYEFEVNGEPVVLHLEKNKDLFSEDYSETRYSPDGRETTTKPPVQDHCYYHGRIQNDAYSSASISACNGLKGHFKLQGETYLIEPLKIPDSEAHAVYKYENIEKEDEAPKMCGVTQTNWESDEPIKKASQLVATSAKRKFHKTFIELVIVVDHRVVKKYDSAATNTKIYEIVNTVNEIFIPLNIRLTLIGVEFWCNRDLINVTSSADDTLDSFGEWRGSDLLNRKRHDNAQLFTDMKFDLSTLGITFLDGMCQAYRSVGIVQEHGNKNFKTAVIMAHELGHNLGMYHDRKNCICNDSSCIMSAVLSSQPSKLFSNCSNHDYRRYLTTYKPKCILNPPLRKDIASPPICGNEIWEEGEECDCGSPKDCQNPCCDAATCKLTPGAECGNGLCCEKCKIKTAGTVCRRARDECDVPEHCTGQSAECPADGFHANGQPCQNNNGYCYNGDCPIMTKQCISLFGSRATVAEDSCFQENQKGSYYGYCRKENGRKIPCAPQDIKCGRLYCLDNSPGNKNPCKMHYRCRDQHKGMVEPGTKCEDGKVCNNKRQCVDVNTAY</sequence>
<comment type="function">
    <text evidence="6 7">Catalytic subunit of blood coagulation factor X-activating enzyme. Activates coagulation factor X (F10) by cleaving the Arg(234)-Ile(235) bond, activates coagulation factor IX (F9) by cleaving the Arg(226)-Val(227) bond and is also able to activate protein C (PROC).</text>
</comment>
<comment type="catalytic activity">
    <reaction>
        <text>Specifically activates several components of the blood clotting system, including coagulation factor X, coagulation factor IX and protein C by cleavage of Arg-|-Xaa bonds. Has no action on insulin B chain.</text>
        <dbReference type="EC" id="3.4.24.58"/>
    </reaction>
</comment>
<comment type="cofactor">
    <cofactor evidence="1">
        <name>Zn(2+)</name>
        <dbReference type="ChEBI" id="CHEBI:29105"/>
    </cofactor>
    <text evidence="1">Binds 1 zinc ion per subunit.</text>
</comment>
<comment type="activity regulation">
    <text evidence="7">Calcium is required for the activity of the heterotrimer.</text>
</comment>
<comment type="biophysicochemical properties">
    <phDependence>
        <text evidence="7">Optimum pH is 7.5-8.0.</text>
    </phDependence>
</comment>
<comment type="subunit">
    <text evidence="6 8">Heterotrimer; disulfide-linked. The heterotrimer consists of 1 heavy chain and 2 light chains (lectins): LC1 and LC2 (AC Q7T045 and AC Q696W1).</text>
</comment>
<comment type="subcellular location">
    <subcellularLocation>
        <location>Secreted</location>
    </subcellularLocation>
</comment>
<comment type="tissue specificity">
    <text>Expressed by the venom gland.</text>
</comment>
<comment type="PTM">
    <text evidence="6 7 8">N-glycosylated. Contains 8.0% of hexoses, 2.5% of hexosamines and 2.5% of sialic acids.</text>
</comment>
<comment type="similarity">
    <text evidence="9">Belongs to the venom metalloproteinase (M12B) family. P-III subfamily. P-IIId sub-subfamily.</text>
</comment>